<organism>
    <name type="scientific">Staphylococcus aureus (strain bovine RF122 / ET3-1)</name>
    <dbReference type="NCBI Taxonomy" id="273036"/>
    <lineage>
        <taxon>Bacteria</taxon>
        <taxon>Bacillati</taxon>
        <taxon>Bacillota</taxon>
        <taxon>Bacilli</taxon>
        <taxon>Bacillales</taxon>
        <taxon>Staphylococcaceae</taxon>
        <taxon>Staphylococcus</taxon>
    </lineage>
</organism>
<dbReference type="EMBL" id="AJ938182">
    <property type="protein sequence ID" value="CAI81901.1"/>
    <property type="molecule type" value="Genomic_DNA"/>
</dbReference>
<dbReference type="RefSeq" id="WP_000794447.1">
    <property type="nucleotide sequence ID" value="NC_007622.1"/>
</dbReference>
<dbReference type="SMR" id="Q2YYX7"/>
<dbReference type="KEGG" id="sab:SAB2212"/>
<dbReference type="HOGENOM" id="CLU_046135_0_0_9"/>
<dbReference type="GO" id="GO:0005886">
    <property type="term" value="C:plasma membrane"/>
    <property type="evidence" value="ECO:0007669"/>
    <property type="project" value="UniProtKB-SubCell"/>
</dbReference>
<dbReference type="GO" id="GO:0004175">
    <property type="term" value="F:endopeptidase activity"/>
    <property type="evidence" value="ECO:0007669"/>
    <property type="project" value="UniProtKB-ARBA"/>
</dbReference>
<dbReference type="GO" id="GO:0080120">
    <property type="term" value="P:CAAX-box protein maturation"/>
    <property type="evidence" value="ECO:0007669"/>
    <property type="project" value="UniProtKB-ARBA"/>
</dbReference>
<dbReference type="InterPro" id="IPR003675">
    <property type="entry name" value="Rce1/LyrA-like_dom"/>
</dbReference>
<dbReference type="Pfam" id="PF02517">
    <property type="entry name" value="Rce1-like"/>
    <property type="match status" value="1"/>
</dbReference>
<sequence>MKNNKISGFQWAMTIFVFFVITMALSIMLRDFQSIIGVKHFIFEVTDLAPLIAAIICILVFKYKKVQLAGLKFSISLKVIERLLLALILPLIILIIGMYSFNTFADSFILLQSTGLSVPITHILIGHILMAFVVEFGFRSYLQNIVETKMNTFFASIVVGLMYSVFSANTTYGTEFAAYNFLYTFSFSMILGELIRATKGRTIYIATTFHASMTFGLIFLFSEEIGDLFSIKVIAISTAIVAVGYIGLSLIIRGIAYLTTRRNLEELEPNNYLDHVNDDEETNHTRAEKSSSNIKDAEKTGVSTASTVGIAKSDTENTVADEPSIHEGTEKTEPQHHIDNQTESNHDEDHDITSESVESAESVKHTLQSDDLTNDSNEDEKQSLKEPATYKEDRRSSVVIDAEKHIEKTEEQSSDKNK</sequence>
<proteinExistence type="inferred from homology"/>
<keyword id="KW-1003">Cell membrane</keyword>
<keyword id="KW-0134">Cell wall</keyword>
<keyword id="KW-0472">Membrane</keyword>
<keyword id="KW-0964">Secreted</keyword>
<keyword id="KW-0812">Transmembrane</keyword>
<keyword id="KW-1133">Transmembrane helix</keyword>
<gene>
    <name type="primary">lyrA</name>
    <name evidence="1" type="synonym">spdC</name>
    <name type="ordered locus">SAB2212</name>
</gene>
<reference key="1">
    <citation type="journal article" date="2007" name="PLoS ONE">
        <title>Molecular correlates of host specialization in Staphylococcus aureus.</title>
        <authorList>
            <person name="Herron-Olson L."/>
            <person name="Fitzgerald J.R."/>
            <person name="Musser J.M."/>
            <person name="Kapur V."/>
        </authorList>
    </citation>
    <scope>NUCLEOTIDE SEQUENCE [LARGE SCALE GENOMIC DNA]</scope>
    <source>
        <strain>bovine RF122 / ET3-1</strain>
    </source>
</reference>
<comment type="function">
    <text evidence="1 2">Involved in bacterial cell envelope homeostasis. Regulates peptidoglycan processing by N-acetylglucosaminidase SagB, perhaps acting as a scaffold protein. Pleiotropic regulator of gene expression, probably acting via interactions with multiple two-component systems (By similarity). Plays a role in the abundant deposition of the immunoglobulin G-binding protein A (spa) at the cross-wall, a subcellular structure that initially arises from cytokinesis (By similarity).</text>
</comment>
<comment type="subunit">
    <text evidence="2">Interacts with N-acetylglucosaminidase SagB; interaction is direct and facilitates peptidoglycan processing. Interacts (via N-terminal region including transmembrane domains) with sensor protein kinase WalK (via N-terminal region including transmembrane domains). Interacts (via N-terminal region including transmembrane domains) with sensor protein kinase SaeS. Interacts with other histidine kinases, perhaps via their transmembrane domains.</text>
</comment>
<comment type="subcellular location">
    <subcellularLocation>
        <location evidence="2">Cell membrane</location>
        <topology evidence="2">Multi-pass membrane protein</topology>
    </subcellularLocation>
    <subcellularLocation>
        <location evidence="1">Secreted</location>
        <location evidence="1">Cell wall</location>
    </subcellularLocation>
    <subcellularLocation>
        <location evidence="2">Cell septum</location>
    </subcellularLocation>
    <text evidence="1">Localization to the cross-wall is enriched in dividing cells.</text>
</comment>
<comment type="domain">
    <text evidence="2">C-terminal region not involved in glucosaminidase activity of the SagB-SpdC/LyrA complex.</text>
</comment>
<comment type="similarity">
    <text evidence="5">Belongs to the LyrA family.</text>
</comment>
<feature type="chain" id="PRO_0000274820" description="Lysostaphin resistance protein A">
    <location>
        <begin position="1"/>
        <end position="418"/>
    </location>
</feature>
<feature type="transmembrane region" description="Helical" evidence="3">
    <location>
        <begin position="9"/>
        <end position="29"/>
    </location>
</feature>
<feature type="transmembrane region" description="Helical" evidence="3">
    <location>
        <begin position="41"/>
        <end position="61"/>
    </location>
</feature>
<feature type="transmembrane region" description="Helical" evidence="3">
    <location>
        <begin position="84"/>
        <end position="104"/>
    </location>
</feature>
<feature type="transmembrane region" description="Helical" evidence="3">
    <location>
        <begin position="118"/>
        <end position="138"/>
    </location>
</feature>
<feature type="transmembrane region" description="Helical" evidence="3">
    <location>
        <begin position="153"/>
        <end position="173"/>
    </location>
</feature>
<feature type="transmembrane region" description="Helical" evidence="3">
    <location>
        <begin position="175"/>
        <end position="195"/>
    </location>
</feature>
<feature type="transmembrane region" description="Helical" evidence="3">
    <location>
        <begin position="202"/>
        <end position="222"/>
    </location>
</feature>
<feature type="transmembrane region" description="Helical" evidence="3">
    <location>
        <begin position="231"/>
        <end position="251"/>
    </location>
</feature>
<feature type="region of interest" description="Disordered" evidence="4">
    <location>
        <begin position="274"/>
        <end position="418"/>
    </location>
</feature>
<feature type="compositionally biased region" description="Basic and acidic residues" evidence="4">
    <location>
        <begin position="282"/>
        <end position="299"/>
    </location>
</feature>
<feature type="compositionally biased region" description="Basic and acidic residues" evidence="4">
    <location>
        <begin position="323"/>
        <end position="353"/>
    </location>
</feature>
<feature type="compositionally biased region" description="Basic and acidic residues" evidence="4">
    <location>
        <begin position="379"/>
        <end position="418"/>
    </location>
</feature>
<protein>
    <recommendedName>
        <fullName>Lysostaphin resistance protein A</fullName>
    </recommendedName>
    <alternativeName>
        <fullName evidence="1">Surface protein display C</fullName>
    </alternativeName>
</protein>
<accession>Q2YYX7</accession>
<evidence type="ECO:0000250" key="1">
    <source>
        <dbReference type="UniProtKB" id="A0A0H3KA40"/>
    </source>
</evidence>
<evidence type="ECO:0000250" key="2">
    <source>
        <dbReference type="UniProtKB" id="Q2FVT1"/>
    </source>
</evidence>
<evidence type="ECO:0000255" key="3"/>
<evidence type="ECO:0000256" key="4">
    <source>
        <dbReference type="SAM" id="MobiDB-lite"/>
    </source>
</evidence>
<evidence type="ECO:0000305" key="5"/>
<name>LYRA_STAAB</name>